<accession>Q00869</accession>
<dbReference type="EC" id="6.3.2.-"/>
<dbReference type="EC" id="2.1.1.-"/>
<dbReference type="EMBL" id="Z18755">
    <property type="protein sequence ID" value="CAA79245.2"/>
    <property type="molecule type" value="Genomic_DNA"/>
</dbReference>
<dbReference type="PIR" id="S39842">
    <property type="entry name" value="S39842"/>
</dbReference>
<dbReference type="SMR" id="Q00869"/>
<dbReference type="UniPathway" id="UPA00234"/>
<dbReference type="GO" id="GO:0005737">
    <property type="term" value="C:cytoplasm"/>
    <property type="evidence" value="ECO:0007669"/>
    <property type="project" value="TreeGrafter"/>
</dbReference>
<dbReference type="GO" id="GO:0016881">
    <property type="term" value="F:acid-amino acid ligase activity"/>
    <property type="evidence" value="ECO:0000250"/>
    <property type="project" value="UniProtKB"/>
</dbReference>
<dbReference type="GO" id="GO:0008168">
    <property type="term" value="F:methyltransferase activity"/>
    <property type="evidence" value="ECO:0000314"/>
    <property type="project" value="UniProtKB"/>
</dbReference>
<dbReference type="GO" id="GO:0031177">
    <property type="term" value="F:phosphopantetheine binding"/>
    <property type="evidence" value="ECO:0007669"/>
    <property type="project" value="InterPro"/>
</dbReference>
<dbReference type="GO" id="GO:0008757">
    <property type="term" value="F:S-adenosylmethionine-dependent methyltransferase activity"/>
    <property type="evidence" value="ECO:0007669"/>
    <property type="project" value="InterPro"/>
</dbReference>
<dbReference type="GO" id="GO:0043041">
    <property type="term" value="P:amino acid activation for nonribosomal peptide biosynthetic process"/>
    <property type="evidence" value="ECO:0007669"/>
    <property type="project" value="TreeGrafter"/>
</dbReference>
<dbReference type="GO" id="GO:0046585">
    <property type="term" value="P:enniatin biosynthetic process"/>
    <property type="evidence" value="ECO:0007669"/>
    <property type="project" value="UniProtKB-UniPathway"/>
</dbReference>
<dbReference type="GO" id="GO:0032259">
    <property type="term" value="P:methylation"/>
    <property type="evidence" value="ECO:0007669"/>
    <property type="project" value="UniProtKB-KW"/>
</dbReference>
<dbReference type="GO" id="GO:0019184">
    <property type="term" value="P:nonribosomal peptide biosynthetic process"/>
    <property type="evidence" value="ECO:0000304"/>
    <property type="project" value="UniProtKB"/>
</dbReference>
<dbReference type="GO" id="GO:0044550">
    <property type="term" value="P:secondary metabolite biosynthetic process"/>
    <property type="evidence" value="ECO:0007669"/>
    <property type="project" value="TreeGrafter"/>
</dbReference>
<dbReference type="CDD" id="cd05930">
    <property type="entry name" value="A_NRPS"/>
    <property type="match status" value="1"/>
</dbReference>
<dbReference type="CDD" id="cd05918">
    <property type="entry name" value="A_NRPS_SidN3_like"/>
    <property type="match status" value="1"/>
</dbReference>
<dbReference type="CDD" id="cd02440">
    <property type="entry name" value="AdoMet_MTases"/>
    <property type="match status" value="1"/>
</dbReference>
<dbReference type="CDD" id="cd19542">
    <property type="entry name" value="CT_NRPS-like"/>
    <property type="match status" value="1"/>
</dbReference>
<dbReference type="CDD" id="cd19545">
    <property type="entry name" value="FUM14_C_NRPS-like"/>
    <property type="match status" value="1"/>
</dbReference>
<dbReference type="CDD" id="cd19531">
    <property type="entry name" value="LCL_NRPS-like"/>
    <property type="match status" value="1"/>
</dbReference>
<dbReference type="FunFam" id="2.30.38.10:FF:000013">
    <property type="entry name" value="Enniatin synthase"/>
    <property type="match status" value="1"/>
</dbReference>
<dbReference type="FunFam" id="3.30.300.30:FF:000084">
    <property type="entry name" value="Enniatin synthase"/>
    <property type="match status" value="1"/>
</dbReference>
<dbReference type="FunFam" id="3.30.300.30:FF:000105">
    <property type="entry name" value="Enniatin synthase"/>
    <property type="match status" value="1"/>
</dbReference>
<dbReference type="FunFam" id="3.40.50.150:FF:000709">
    <property type="entry name" value="Enniatin synthase"/>
    <property type="match status" value="1"/>
</dbReference>
<dbReference type="FunFam" id="3.30.300.30:FF:000015">
    <property type="entry name" value="Nonribosomal peptide synthase SidD"/>
    <property type="match status" value="1"/>
</dbReference>
<dbReference type="Gene3D" id="3.30.300.30">
    <property type="match status" value="3"/>
</dbReference>
<dbReference type="Gene3D" id="3.40.50.980">
    <property type="match status" value="2"/>
</dbReference>
<dbReference type="Gene3D" id="1.10.1200.10">
    <property type="entry name" value="ACP-like"/>
    <property type="match status" value="2"/>
</dbReference>
<dbReference type="Gene3D" id="3.40.50.1820">
    <property type="entry name" value="alpha/beta hydrolase"/>
    <property type="match status" value="1"/>
</dbReference>
<dbReference type="Gene3D" id="3.30.559.10">
    <property type="entry name" value="Chloramphenicol acetyltransferase-like domain"/>
    <property type="match status" value="3"/>
</dbReference>
<dbReference type="Gene3D" id="2.30.38.10">
    <property type="entry name" value="Luciferase, Domain 3"/>
    <property type="match status" value="1"/>
</dbReference>
<dbReference type="Gene3D" id="3.40.50.12780">
    <property type="entry name" value="N-terminal domain of ligase-like"/>
    <property type="match status" value="1"/>
</dbReference>
<dbReference type="Gene3D" id="3.30.559.30">
    <property type="entry name" value="Nonribosomal peptide synthetase, condensation domain"/>
    <property type="match status" value="3"/>
</dbReference>
<dbReference type="Gene3D" id="3.40.50.150">
    <property type="entry name" value="Vaccinia Virus protein VP39"/>
    <property type="match status" value="1"/>
</dbReference>
<dbReference type="InterPro" id="IPR010071">
    <property type="entry name" value="AA_adenyl_dom"/>
</dbReference>
<dbReference type="InterPro" id="IPR029058">
    <property type="entry name" value="AB_hydrolase_fold"/>
</dbReference>
<dbReference type="InterPro" id="IPR036736">
    <property type="entry name" value="ACP-like_sf"/>
</dbReference>
<dbReference type="InterPro" id="IPR045851">
    <property type="entry name" value="AMP-bd_C_sf"/>
</dbReference>
<dbReference type="InterPro" id="IPR020845">
    <property type="entry name" value="AMP-binding_CS"/>
</dbReference>
<dbReference type="InterPro" id="IPR000873">
    <property type="entry name" value="AMP-dep_synth/lig_dom"/>
</dbReference>
<dbReference type="InterPro" id="IPR042099">
    <property type="entry name" value="ANL_N_sf"/>
</dbReference>
<dbReference type="InterPro" id="IPR023213">
    <property type="entry name" value="CAT-like_dom_sf"/>
</dbReference>
<dbReference type="InterPro" id="IPR001242">
    <property type="entry name" value="Condensatn"/>
</dbReference>
<dbReference type="InterPro" id="IPR013216">
    <property type="entry name" value="Methyltransf_11"/>
</dbReference>
<dbReference type="InterPro" id="IPR020806">
    <property type="entry name" value="PKS_PP-bd"/>
</dbReference>
<dbReference type="InterPro" id="IPR009081">
    <property type="entry name" value="PP-bd_ACP"/>
</dbReference>
<dbReference type="InterPro" id="IPR006162">
    <property type="entry name" value="Ppantetheine_attach_site"/>
</dbReference>
<dbReference type="InterPro" id="IPR029063">
    <property type="entry name" value="SAM-dependent_MTases_sf"/>
</dbReference>
<dbReference type="NCBIfam" id="TIGR01733">
    <property type="entry name" value="AA-adenyl-dom"/>
    <property type="match status" value="2"/>
</dbReference>
<dbReference type="PANTHER" id="PTHR45527:SF16">
    <property type="entry name" value="NONRIBOSOMAL PEPTIDE SYNTHASE ATNA-RELATED"/>
    <property type="match status" value="1"/>
</dbReference>
<dbReference type="PANTHER" id="PTHR45527">
    <property type="entry name" value="NONRIBOSOMAL PEPTIDE SYNTHETASE"/>
    <property type="match status" value="1"/>
</dbReference>
<dbReference type="Pfam" id="PF00501">
    <property type="entry name" value="AMP-binding"/>
    <property type="match status" value="2"/>
</dbReference>
<dbReference type="Pfam" id="PF00668">
    <property type="entry name" value="Condensation"/>
    <property type="match status" value="3"/>
</dbReference>
<dbReference type="Pfam" id="PF08241">
    <property type="entry name" value="Methyltransf_11"/>
    <property type="match status" value="1"/>
</dbReference>
<dbReference type="Pfam" id="PF00550">
    <property type="entry name" value="PP-binding"/>
    <property type="match status" value="3"/>
</dbReference>
<dbReference type="SMART" id="SM00823">
    <property type="entry name" value="PKS_PP"/>
    <property type="match status" value="3"/>
</dbReference>
<dbReference type="SUPFAM" id="SSF56801">
    <property type="entry name" value="Acetyl-CoA synthetase-like"/>
    <property type="match status" value="2"/>
</dbReference>
<dbReference type="SUPFAM" id="SSF47336">
    <property type="entry name" value="ACP-like"/>
    <property type="match status" value="3"/>
</dbReference>
<dbReference type="SUPFAM" id="SSF52777">
    <property type="entry name" value="CoA-dependent acyltransferases"/>
    <property type="match status" value="6"/>
</dbReference>
<dbReference type="SUPFAM" id="SSF53335">
    <property type="entry name" value="S-adenosyl-L-methionine-dependent methyltransferases"/>
    <property type="match status" value="1"/>
</dbReference>
<dbReference type="PROSITE" id="PS00455">
    <property type="entry name" value="AMP_BINDING"/>
    <property type="match status" value="2"/>
</dbReference>
<dbReference type="PROSITE" id="PS50075">
    <property type="entry name" value="CARRIER"/>
    <property type="match status" value="3"/>
</dbReference>
<dbReference type="PROSITE" id="PS00012">
    <property type="entry name" value="PHOSPHOPANTETHEINE"/>
    <property type="match status" value="3"/>
</dbReference>
<feature type="chain" id="PRO_0000180306" description="Enniatin synthase">
    <location>
        <begin position="1"/>
        <end position="3131"/>
    </location>
</feature>
<feature type="domain" description="Carrier 1" evidence="3">
    <location>
        <begin position="1010"/>
        <end position="1086"/>
    </location>
</feature>
<feature type="domain" description="Carrier 2" evidence="3">
    <location>
        <begin position="2504"/>
        <end position="2578"/>
    </location>
</feature>
<feature type="domain" description="Carrier 3" evidence="3">
    <location>
        <begin position="2598"/>
        <end position="2671"/>
    </location>
</feature>
<feature type="region of interest" description="Condensation 1" evidence="1 2">
    <location>
        <begin position="53"/>
        <end position="466"/>
    </location>
</feature>
<feature type="region of interest" description="Disordered" evidence="4">
    <location>
        <begin position="186"/>
        <end position="212"/>
    </location>
</feature>
<feature type="region of interest" description="Adenylation 1" evidence="1 2">
    <location>
        <begin position="495"/>
        <end position="887"/>
    </location>
</feature>
<feature type="region of interest" description="Condensation 2" evidence="1 2">
    <location>
        <begin position="1105"/>
        <end position="1534"/>
    </location>
</feature>
<feature type="region of interest" description="Adenylation 2" evidence="1 2">
    <location>
        <begin position="1563"/>
        <end position="1960"/>
    </location>
</feature>
<feature type="region of interest" description="S-adenosyl-L-methionine-dependent N-methyltransferase" evidence="1 2 16 17 18">
    <location>
        <begin position="2021"/>
        <end position="2177"/>
    </location>
</feature>
<feature type="region of interest" description="Condensation 3" evidence="1 2">
    <location>
        <begin position="2718"/>
        <end position="3123"/>
    </location>
</feature>
<feature type="modified residue" description="O-(pantetheine 4'-phosphoryl)serine" evidence="3">
    <location>
        <position position="1047"/>
    </location>
</feature>
<feature type="modified residue" description="O-(pantetheine 4'-phosphoryl)serine" evidence="3">
    <location>
        <position position="2538"/>
    </location>
</feature>
<feature type="modified residue" description="O-(pantetheine 4'-phosphoryl)serine" evidence="3">
    <location>
        <position position="2632"/>
    </location>
</feature>
<feature type="mutagenesis site" description="Reduces S-adenosyl-L-methionine binding." evidence="5">
    <original>Y</original>
    <variation>A</variation>
    <variation>S</variation>
    <variation>V</variation>
    <location>
        <position position="2106"/>
    </location>
</feature>
<feature type="mutagenesis site" description="Has minimal effect on S-adenosyl-L-methionine binding." evidence="5">
    <original>Y</original>
    <variation>F</variation>
    <location>
        <position position="2106"/>
    </location>
</feature>
<sequence length="3131" mass="346499">MSLHTPSDGQQDPALASKTLCEQISRALGLGQDKIENIFPGTPFQRDVIDCAADDKQRAVGHAVFEIPKDIDAARLAAAWKETVLHTPALRTCTFTSKSGDVLQVVLRDSFVFSWMSGPSVDLKEAVVQDEAAAALAGPRCNRFVLLEDPDTKERQLIWTFSHALVDSTFQERILRRVLKAYKDANDEHPRQFETPDSSQATPEEDLQPNPSKMLKIPQAADMDRAVEFWKDHLSGLKCFCLPAFVLSSVYAHPDAKAEHRISYSSSAQQKMSSATICRTALAILLSRYTHSPEALFGIVTEQTPLLEEQLMLDGPTRTVVPIRVSCASEQSVSDIMSTIDSYDQTMRQFAHAGLRNIASAGDDESAACGFQTVLLVSDGDAQPASTWEILKKTEEPEGFIPCTNRALLLSCQMTSSGAHLTARYDQSIIDAEQMARLLRQLGHLIQNLQTSTDLPVEKVDMMTQEDWLEIERWNSDSIDAQDTLIHSEMLKWTSQSPNKAAVAAWDGEWTYAELDNVSSRLAQHINSIDLGKEHAIVPIYFEKSKWVVASMLAVLKAGHAFTLIDPSDPPARTAQVVQQTSATVALTSKLHRETVQSTVGRCIVVDEEFVKSLPQSSELSASVKAHDLAYVIFTSGSTGIPKGIMIEHRSFSSCAIKFGPALGITSDTRALQFGSHAFGACILEIMTTLIHGGCVCIPSDDDRMNNVLEFINRTNVQLGHATPSYMGTFQPEVVPGLKTLVLVGEQMSASVNEVWAPRVQLLNGYGQSESSSICCVAKISPGSSEPNNIGHAVGAHSWIVDPEDPNRLAPIGAVGELVIESAGIARDYIVAPTQDKSPFIKTAPTWYPAKQLPDGFKIYRTGDLACYASDGSIVCLGRMDSQVKIRGQRVELGAVETHLRQQMPDDMTIVVEAVKFSDSSSTTVLTAFLIGAGEKNSHILDQRATREINAKMEQVLPRHSIPAFYISMNNLPQTATGKVDRRKLRIMGSKILSQKTHSTPSQQSQAAISSGTDTYTKLESIWITSLDLEPGSANMSATFFEMGGNSIIAIKMVNMARSNGIELKVSDIYQNPTLAGLKAIVIGTSLPYSLIPKVTRQGPVSEQSYAQNRMWFLDQLSEGASWYLIPFAVRMRGPVDVDALTRALLALEQRHETLRTTFENQDGVGVQIIHDRLSKELQVIDALDGDEGGLKTLYKVETTTFDITSEAGWSSTLIRLGKDDHILSIVMHHIISDGWSIDVLRRELIQLYAAALQGKDPSSALTPLPIQYSDFAVWQKQEAQAAEHERQLQYWKKQLADSSPAKIPTDFPRPDLLSGDAGVVPVAIDGELYQKLRGFCNKHNSTAFSILLAAFRAAHYRLTAVDDAVIGIPIANRNRWELENMIGFFVNTQCMRIAVDETDTFESLVRQVRSTTTAAFAHEDVPFERVVSALQPGHRDLSRTPLAQIMFAVHSQKDLGRFELEGIQSEPIASKAYTRFDVEFHLFQQADGLKGSCNFATDLFKPETIQNVVSVFFQILRHGLDQPETCISVLPLTDGVEELRRLDLLEIKRTNYPRDSSVVDVFREQAAANPEVIAVTDSSSRLTYAELDNKSELLSRWLRRRNLTPETLVSVLAPRSCETIVAYVGILKANLAYLPLDVRSPVTRMKDILSSVSGNTIVLMGSGVEDPGFDLPQLELVRITDTFDETIEDVQDSPQPSATSLAYVVFTSGSTGKPKGVMIEHRAIVRLVKSDNFPGFPSPARMSNVFNPAFDGAIWEINWMLLNGGTVVCIDYLTTLDGKELAAVFAKERVNAAFFAPAMLKLYLVDAREALKNLDFLIVGGERFDTKEAVEAMPLVRGKIANIYGPTEAGIISTCYNIPKDEAYTNGVPIGGSIYNSGAYVMDPNQQLVGLGVMGELVVTGDGVGRGYTNPELNKNRFIDITIEGKTFKAYRTGDRMRARVGDGLLEFFGRMDNQFKIRGNRIEAGEVESAMLSLKNVLNAAIVVRGGGEDEGPLEMVGFIVADDKNDTTEEEETGNQVEGWQDHFESGMYSDISTAVDQSAIGNDFKGWTSMYDGKDIDKGEMQEWLDDAIHTLHNGQIPRDVLEIGTGSGMILFNLNPGLNSYVGLDPSKSAVEFVNRAVESSPKFAGKAKVHVGMATDVNKLGEVHPDLVVFNSVVQYFPTPEYLAEVIDGLIAIPSVKRIFLGDIRSYATNGHFLAARAIHTLGTNNNATKDRVRQKIQELEDREEEFLVEPAFFTTLKERRPDVVKHVEIIPKNMKATNELSAYRYTAVVHLRDETDEPVYHIEKDSWVDFEAKQMDKTALLDHLRLSKDAMSVAVSNITYAHTAFERRIVESLDEDSKDDTKGTLDGAAWLSAVRSEAENRASLTVPDILEIAKEAGFRVEVSAARQWSQSGALDAVFHHFPPSSTDRTLIQFPTDNELRSSLTLANRPLQKLQRRRAALQVREKLQTLVPSYMVPPNIVVLDTMPLNTNGKIDRKELTRRARTLPKQQTAAPVPDFPISDIEITLCEEATEVFGMKVEISDHFFQLGGHSLLATKLISRIQHRLHVRVTVKDVFDSPVFADLAVIIRQGLAMQNPVAEGQDKQGWSSRVAPRTEVEKMLCEEFAAGLGVPVGITDNFFDLGGHSLMATKLAVRIGRRLIRHHSQGHLRLPCAFQLAKKLESSHSKSYEESGDDIQMADYTAFQLLDLEDPQDFVQSQIRPQLDSCYGTIQDVYPSTQMQKAFLFDPTTGEPRGLVPFYIDFPSNADAETLTKAIGALVDKLDMFRTVFLEAAGDLYQVVVEHLNLPIETIETEKNVNTATGDYLDVHGKDPVRLGHPCIQFAILKTASSVRVLLRMSHALYDGLSFEYIVRGLHVLYSGRNLPPPTQFARYMQYAAHSREEGYPFWREVLQNAPMTVLHDTNNGMSEQEMPASKAVHLSEVVNVPAQAIRNSTNTQATVFNTACALVLAKESGSQDVVFGRIVSGRQGLPVVWQDIIGPCTNAVPVHARVDDGNPQRIIRDLRDQYLRTLPFESLGFEEIKRNCTDWPEELTNFSVCVTYHNFEYHPESEVDNQKVEMGVLAKYVELSENEPLYDLAIAGEVEADGVNLKVTVVAKARLYNEARIRHVLEEVCKTFNGLNEAL</sequence>
<keyword id="KW-0903">Direct protein sequencing</keyword>
<keyword id="KW-0436">Ligase</keyword>
<keyword id="KW-0489">Methyltransferase</keyword>
<keyword id="KW-0511">Multifunctional enzyme</keyword>
<keyword id="KW-0596">Phosphopantetheine</keyword>
<keyword id="KW-0597">Phosphoprotein</keyword>
<keyword id="KW-0677">Repeat</keyword>
<keyword id="KW-0808">Transferase</keyword>
<evidence type="ECO:0000250" key="1">
    <source>
        <dbReference type="UniProtKB" id="A0A0A1EA36"/>
    </source>
</evidence>
<evidence type="ECO:0000255" key="2"/>
<evidence type="ECO:0000255" key="3">
    <source>
        <dbReference type="PROSITE-ProRule" id="PRU00258"/>
    </source>
</evidence>
<evidence type="ECO:0000256" key="4">
    <source>
        <dbReference type="SAM" id="MobiDB-lite"/>
    </source>
</evidence>
<evidence type="ECO:0000269" key="5">
    <source>
    </source>
</evidence>
<evidence type="ECO:0000269" key="6">
    <source>
    </source>
</evidence>
<evidence type="ECO:0000269" key="7">
    <source>
    </source>
</evidence>
<evidence type="ECO:0000269" key="8">
    <source>
    </source>
</evidence>
<evidence type="ECO:0000269" key="9">
    <source>
    </source>
</evidence>
<evidence type="ECO:0000269" key="10">
    <source>
    </source>
</evidence>
<evidence type="ECO:0000269" key="11">
    <source>
    </source>
</evidence>
<evidence type="ECO:0000269" key="12">
    <source ref="4"/>
</evidence>
<evidence type="ECO:0000303" key="13">
    <source>
    </source>
</evidence>
<evidence type="ECO:0000303" key="14">
    <source>
    </source>
</evidence>
<evidence type="ECO:0000305" key="15"/>
<evidence type="ECO:0000305" key="16">
    <source>
    </source>
</evidence>
<evidence type="ECO:0000305" key="17">
    <source>
    </source>
</evidence>
<evidence type="ECO:0000305" key="18">
    <source>
    </source>
</evidence>
<gene>
    <name evidence="13" type="primary">ESYN1</name>
</gene>
<name>ESYN_FUSEQ</name>
<proteinExistence type="evidence at protein level"/>
<organism>
    <name type="scientific">Fusarium equiseti</name>
    <name type="common">Fusarium scirpi</name>
    <dbReference type="NCBI Taxonomy" id="61235"/>
    <lineage>
        <taxon>Eukaryota</taxon>
        <taxon>Fungi</taxon>
        <taxon>Dikarya</taxon>
        <taxon>Ascomycota</taxon>
        <taxon>Pezizomycotina</taxon>
        <taxon>Sordariomycetes</taxon>
        <taxon>Hypocreomycetidae</taxon>
        <taxon>Hypocreales</taxon>
        <taxon>Nectriaceae</taxon>
        <taxon>Fusarium</taxon>
        <taxon>Fusarium incarnatum-equiseti species complex</taxon>
    </lineage>
</organism>
<reference key="1">
    <citation type="journal article" date="1993" name="Mol. Microbiol.">
        <title>Molecular characterization of the enniatin synthetase gene encoding a multifunctional enzyme catalysing N-methyldepsipeptide formation in Fusarium scirpi.</title>
        <authorList>
            <person name="Haese A."/>
            <person name="Schubert M."/>
            <person name="Herrmann M."/>
            <person name="Zocher R."/>
        </authorList>
    </citation>
    <scope>NUCLEOTIDE SEQUENCE [GENOMIC DNA]</scope>
    <scope>FUNCTION</scope>
    <scope>DOMAIN</scope>
    <scope>PATHWAY</scope>
    <source>
        <strain>Lambotte et Fautrey</strain>
    </source>
</reference>
<reference key="2">
    <citation type="submission" date="2001-09" db="EMBL/GenBank/DDBJ databases">
        <authorList>
            <person name="Zocher R."/>
        </authorList>
    </citation>
    <scope>SEQUENCE REVISION</scope>
</reference>
<reference key="3">
    <citation type="journal article" date="1995" name="Eur. J. Biochem.">
        <title>Arrangement of catalytic sites in the multifunctional enzyme enniatin synthetase.</title>
        <authorList>
            <person name="Pieper R."/>
            <person name="Haese A."/>
            <person name="Schroeder W."/>
            <person name="Zocher R."/>
        </authorList>
    </citation>
    <scope>PROTEIN SEQUENCE OF 1011-1034; 1677-1695; 2029-2049; 2098-2106 AND 2294-2299</scope>
    <scope>FUNCTION</scope>
    <scope>DOMAIN</scope>
    <scope>PATHWAY</scope>
    <source>
        <strain>Lambotte et Fautrey</strain>
    </source>
</reference>
<reference key="4">
    <citation type="journal article" date="1987" name="Biochemistry">
        <title>N-methyltransferase function of the multifunctional enzyme enniatin synthetase.</title>
        <authorList>
            <person name="Billich A."/>
            <person name="Zocher R."/>
        </authorList>
    </citation>
    <scope>ACTIVITY REGULATION</scope>
    <source>
        <strain>Lambotte et Fautrey</strain>
    </source>
</reference>
<reference key="5">
    <citation type="journal article" date="2000" name="J. Biol. Chem.">
        <title>Mutational analysis of the N-methyltransferase domain of the multifunctional enzyme enniatin synthetase.</title>
        <authorList>
            <person name="Hacker C."/>
            <person name="Glinski M."/>
            <person name="Hornbogen T."/>
            <person name="Doller A."/>
            <person name="Zocher R."/>
        </authorList>
    </citation>
    <scope>FUNCTION</scope>
    <scope>MUTAGENESIS OF TYR-2106</scope>
    <scope>DOMAIN</scope>
    <scope>PATHWAY</scope>
</reference>
<reference key="6">
    <citation type="journal article" date="1997" name="J. Nat. Prod.">
        <title>Isolation and characterization of new anti-HIV and cytotoxic leads from plants, marine, and microbial organisms.</title>
        <authorList>
            <person name="McKee T.C."/>
            <person name="Bokesch H.R."/>
            <person name="McCormick J.L."/>
            <person name="Rashid M.A."/>
            <person name="Spielvogel D."/>
            <person name="Gustafson K.R."/>
            <person name="Alavanja M.M."/>
            <person name="Cardelline J.H. II"/>
            <person name="Boyd M.R."/>
        </authorList>
    </citation>
    <scope>BIOTECHNOLOGY</scope>
</reference>
<reference key="7">
    <citation type="journal article" date="2005" name="Biochem. Biophys. Res. Commun.">
        <title>Enniatin has a new function as an inhibitor of Pdr5p, one of the ABC transporters in Saccharomyces cerevisiae.</title>
        <authorList>
            <person name="Hiraga K."/>
            <person name="Yamamoto S."/>
            <person name="Fukuda H."/>
            <person name="Hamanaka N."/>
            <person name="Oda K."/>
        </authorList>
    </citation>
    <scope>BIOTECHNOLOGY</scope>
</reference>
<reference key="8">
    <citation type="journal article" date="2006" name="J. Nat. Prod.">
        <title>N-Methyl-4-hydroxy-2-pyridinone analogues from Fusarium oxysporum.</title>
        <authorList>
            <person name="Jayasinghe L."/>
            <person name="Abbas H.K."/>
            <person name="Jacob M.R."/>
            <person name="Herath W.H."/>
            <person name="Nanayakkara N.P."/>
        </authorList>
    </citation>
    <scope>BIOTECHNOLOGY</scope>
</reference>
<reference key="9">
    <citation type="journal article" date="2007" name="Chem. Res. Toxicol.">
        <title>Enniatin exerts p53-dependent cytostatic and p53-independent cytotoxic activities against human cancer cells.</title>
        <authorList>
            <person name="Dornetshuber R."/>
            <person name="Heffeter P."/>
            <person name="Kamyar M.R."/>
            <person name="Peterbauer T."/>
            <person name="Berger W."/>
            <person name="Lemmens-Gruber R."/>
        </authorList>
    </citation>
    <scope>BIOTECHNOLOGY</scope>
</reference>
<protein>
    <recommendedName>
        <fullName evidence="14">Enniatin synthase</fullName>
    </recommendedName>
    <alternativeName>
        <fullName evidence="13">Nonribosomal cyclopeptide synthetase ESYN1</fullName>
    </alternativeName>
    <domain>
        <recommendedName>
            <fullName evidence="13">N-methylcyclopeptide synthetase</fullName>
            <ecNumber>6.3.2.-</ecNumber>
        </recommendedName>
    </domain>
    <domain>
        <recommendedName>
            <fullName evidence="13">S-adenosyl-L-methionine-dependent N-methyltransferase</fullName>
            <ecNumber>2.1.1.-</ecNumber>
        </recommendedName>
    </domain>
</protein>
<comment type="function">
    <text evidence="5 9">Nonribosomal peptide synthetase that synthesizes enniatin by coupling three D-hydroxycarboxylic acids and three L-amino acids via amide and ester bonds in an alternating fashion (PubMed:10887181, PubMed:7601090). Whereas ESYN1 can accept different amino acids as precursors (L -valine, L-isoleucine or L-leucine), only one species of D-hydroxycarboxylic acid can be found in natural enniatin isolates (D-hydroxyisovaleric acid, D-Hiv) (PubMed:10887181, PubMed:7601090). D-Hiv stems from L-valine deanimation by a valine aminotransferase to 2-keto-isovaleric acid (2-Kiv), which becomes subsequently reduced by a keto-isovaleric acid reductase (KivR) to D-Hiv (PubMed:10887181, PubMed:7601090). Peptide bond formation and N-methylation of the amino acid occur before three enzyme-bound dipeptidols are condensed to a hexapeptidol (PubMed:10887181, PubMed:7601090).</text>
</comment>
<comment type="cofactor">
    <cofactor evidence="15">
        <name>pantetheine 4'-phosphate</name>
        <dbReference type="ChEBI" id="CHEBI:47942"/>
    </cofactor>
    <text evidence="15">Binds 6 phosphopantetheines covalently.</text>
</comment>
<comment type="activity regulation">
    <text evidence="12">The N-methylation activity is inhibited by S-adenosyl-L-homocysteine and sinefugin.</text>
</comment>
<comment type="pathway">
    <text evidence="5 9 10">Antibiotic biosynthesis; enniatin biosynthesis.</text>
</comment>
<comment type="domain">
    <text evidence="15 16 18">NRP synthetases are composed of discrete domains (adenylation (A), thiolation (T) or peptidyl carrier protein (PCP) and condensation (C) domains) which when grouped together are referred to as a single module. Each module is responsible for the recognition (via the A domain) and incorporation of a single amino acid into the growing peptide product. Thus, an NRP synthetase is generally composed of one or more modules and can terminate in a thioesterase domain (TE) that releases the newly synthesized peptide from the enzyme. Occasionally, additional domains required for further modifications are also present (Probable). Enniatin synthetase has the C1-A1-T1-C2-A2-MT-T2a-T2b-C3 domain organization (Probable). The precursors D-hydroxycarboxylic acids and L-amino acids become activated at the A1 and the A2 domains. N-methylation of the amino acid takes place at the MT-domain. The building blocks are transferred from one module to another by means of T-domains and are ultimately stored at the waiting position T2b. Condensation of the building blocks and final cyclization and release from the enzyme is catalyzed by the C-domains (Probable).</text>
</comment>
<comment type="PTM">
    <text>The N-terminus is blocked.</text>
</comment>
<comment type="biotechnology">
    <text evidence="6 7 8 11">Enniatins have antimicrobial, antiviral and cytotoxic properties (PubMed:16562855, PubMed:17326668, PubMed:9170286). The bioactivity of enniatins can be linked to their inhibition of drug efflux pumps (PubMed:15707993).</text>
</comment>
<comment type="similarity">
    <text evidence="15">Belongs to the ATP-dependent AMP-binding enzyme family.</text>
</comment>